<gene>
    <name type="ordered locus">FTM_0733</name>
</gene>
<proteinExistence type="inferred from homology"/>
<comment type="similarity">
    <text evidence="1">Belongs to the UPF0434 family.</text>
</comment>
<evidence type="ECO:0000255" key="1">
    <source>
        <dbReference type="HAMAP-Rule" id="MF_01187"/>
    </source>
</evidence>
<organism>
    <name type="scientific">Francisella tularensis subsp. mediasiatica (strain FSC147)</name>
    <dbReference type="NCBI Taxonomy" id="441952"/>
    <lineage>
        <taxon>Bacteria</taxon>
        <taxon>Pseudomonadati</taxon>
        <taxon>Pseudomonadota</taxon>
        <taxon>Gammaproteobacteria</taxon>
        <taxon>Thiotrichales</taxon>
        <taxon>Francisellaceae</taxon>
        <taxon>Francisella</taxon>
    </lineage>
</organism>
<protein>
    <recommendedName>
        <fullName evidence="1">UPF0434 protein FTM_0733</fullName>
    </recommendedName>
</protein>
<feature type="chain" id="PRO_1000138312" description="UPF0434 protein FTM_0733">
    <location>
        <begin position="1"/>
        <end position="62"/>
    </location>
</feature>
<sequence>MDHSVLNVLVCPICKANLYYGKENQVLVCKADKLAYPIRENIPVMLVEEAKKMTLEEVKKYG</sequence>
<name>Y733_FRATM</name>
<dbReference type="EMBL" id="CP000915">
    <property type="protein sequence ID" value="ACD30709.1"/>
    <property type="molecule type" value="Genomic_DNA"/>
</dbReference>
<dbReference type="SMR" id="B2SG50"/>
<dbReference type="KEGG" id="ftm:FTM_0733"/>
<dbReference type="HOGENOM" id="CLU_155659_3_1_6"/>
<dbReference type="GO" id="GO:0005829">
    <property type="term" value="C:cytosol"/>
    <property type="evidence" value="ECO:0007669"/>
    <property type="project" value="TreeGrafter"/>
</dbReference>
<dbReference type="FunFam" id="2.20.25.10:FF:000002">
    <property type="entry name" value="UPF0434 protein YcaR"/>
    <property type="match status" value="1"/>
</dbReference>
<dbReference type="Gene3D" id="2.20.25.10">
    <property type="match status" value="1"/>
</dbReference>
<dbReference type="HAMAP" id="MF_01187">
    <property type="entry name" value="UPF0434"/>
    <property type="match status" value="1"/>
</dbReference>
<dbReference type="InterPro" id="IPR005651">
    <property type="entry name" value="Trm112-like"/>
</dbReference>
<dbReference type="PANTHER" id="PTHR33505:SF4">
    <property type="entry name" value="PROTEIN PREY, MITOCHONDRIAL"/>
    <property type="match status" value="1"/>
</dbReference>
<dbReference type="PANTHER" id="PTHR33505">
    <property type="entry name" value="ZGC:162634"/>
    <property type="match status" value="1"/>
</dbReference>
<dbReference type="Pfam" id="PF03966">
    <property type="entry name" value="Trm112p"/>
    <property type="match status" value="1"/>
</dbReference>
<dbReference type="SUPFAM" id="SSF158997">
    <property type="entry name" value="Trm112p-like"/>
    <property type="match status" value="1"/>
</dbReference>
<accession>B2SG50</accession>
<reference key="1">
    <citation type="journal article" date="2009" name="PLoS Pathog.">
        <title>Molecular evolutionary consequences of niche restriction in Francisella tularensis, a facultative intracellular pathogen.</title>
        <authorList>
            <person name="Larsson P."/>
            <person name="Elfsmark D."/>
            <person name="Svensson K."/>
            <person name="Wikstroem P."/>
            <person name="Forsman M."/>
            <person name="Brettin T."/>
            <person name="Keim P."/>
            <person name="Johansson A."/>
        </authorList>
    </citation>
    <scope>NUCLEOTIDE SEQUENCE [LARGE SCALE GENOMIC DNA]</scope>
    <source>
        <strain>FSC147</strain>
    </source>
</reference>